<dbReference type="EMBL" id="AP009152">
    <property type="protein sequence ID" value="BAG30704.1"/>
    <property type="molecule type" value="Genomic_DNA"/>
</dbReference>
<dbReference type="RefSeq" id="WP_012399425.1">
    <property type="nucleotide sequence ID" value="NZ_VECX01000003.1"/>
</dbReference>
<dbReference type="SMR" id="B2GJF6"/>
<dbReference type="STRING" id="378753.KRH_23570"/>
<dbReference type="GeneID" id="93232134"/>
<dbReference type="KEGG" id="krh:KRH_23570"/>
<dbReference type="eggNOG" id="COG0230">
    <property type="taxonomic scope" value="Bacteria"/>
</dbReference>
<dbReference type="HOGENOM" id="CLU_129938_2_1_11"/>
<dbReference type="Proteomes" id="UP000008838">
    <property type="component" value="Chromosome"/>
</dbReference>
<dbReference type="GO" id="GO:1990904">
    <property type="term" value="C:ribonucleoprotein complex"/>
    <property type="evidence" value="ECO:0007669"/>
    <property type="project" value="UniProtKB-KW"/>
</dbReference>
<dbReference type="GO" id="GO:0005840">
    <property type="term" value="C:ribosome"/>
    <property type="evidence" value="ECO:0007669"/>
    <property type="project" value="UniProtKB-KW"/>
</dbReference>
<dbReference type="GO" id="GO:0003735">
    <property type="term" value="F:structural constituent of ribosome"/>
    <property type="evidence" value="ECO:0007669"/>
    <property type="project" value="InterPro"/>
</dbReference>
<dbReference type="GO" id="GO:0006412">
    <property type="term" value="P:translation"/>
    <property type="evidence" value="ECO:0007669"/>
    <property type="project" value="UniProtKB-UniRule"/>
</dbReference>
<dbReference type="FunFam" id="1.10.287.3980:FF:000001">
    <property type="entry name" value="Mitochondrial ribosomal protein L34"/>
    <property type="match status" value="1"/>
</dbReference>
<dbReference type="Gene3D" id="1.10.287.3980">
    <property type="match status" value="1"/>
</dbReference>
<dbReference type="HAMAP" id="MF_00391">
    <property type="entry name" value="Ribosomal_bL34"/>
    <property type="match status" value="1"/>
</dbReference>
<dbReference type="InterPro" id="IPR000271">
    <property type="entry name" value="Ribosomal_bL34"/>
</dbReference>
<dbReference type="InterPro" id="IPR020939">
    <property type="entry name" value="Ribosomal_bL34_CS"/>
</dbReference>
<dbReference type="NCBIfam" id="TIGR01030">
    <property type="entry name" value="rpmH_bact"/>
    <property type="match status" value="1"/>
</dbReference>
<dbReference type="PANTHER" id="PTHR14503:SF4">
    <property type="entry name" value="LARGE RIBOSOMAL SUBUNIT PROTEIN BL34M"/>
    <property type="match status" value="1"/>
</dbReference>
<dbReference type="PANTHER" id="PTHR14503">
    <property type="entry name" value="MITOCHONDRIAL RIBOSOMAL PROTEIN 34 FAMILY MEMBER"/>
    <property type="match status" value="1"/>
</dbReference>
<dbReference type="Pfam" id="PF00468">
    <property type="entry name" value="Ribosomal_L34"/>
    <property type="match status" value="1"/>
</dbReference>
<dbReference type="PROSITE" id="PS00784">
    <property type="entry name" value="RIBOSOMAL_L34"/>
    <property type="match status" value="1"/>
</dbReference>
<organism>
    <name type="scientific">Kocuria rhizophila (strain ATCC 9341 / DSM 348 / NBRC 103217 / DC2201)</name>
    <dbReference type="NCBI Taxonomy" id="378753"/>
    <lineage>
        <taxon>Bacteria</taxon>
        <taxon>Bacillati</taxon>
        <taxon>Actinomycetota</taxon>
        <taxon>Actinomycetes</taxon>
        <taxon>Micrococcales</taxon>
        <taxon>Micrococcaceae</taxon>
        <taxon>Kocuria</taxon>
    </lineage>
</organism>
<proteinExistence type="inferred from homology"/>
<keyword id="KW-1185">Reference proteome</keyword>
<keyword id="KW-0687">Ribonucleoprotein</keyword>
<keyword id="KW-0689">Ribosomal protein</keyword>
<feature type="chain" id="PRO_1000196059" description="Large ribosomal subunit protein bL34">
    <location>
        <begin position="1"/>
        <end position="45"/>
    </location>
</feature>
<gene>
    <name evidence="1" type="primary">rpmH</name>
    <name type="ordered locus">KRH_23570</name>
</gene>
<accession>B2GJF6</accession>
<comment type="similarity">
    <text evidence="1">Belongs to the bacterial ribosomal protein bL34 family.</text>
</comment>
<reference key="1">
    <citation type="journal article" date="2008" name="J. Bacteriol.">
        <title>Complete genome sequence of the soil actinomycete Kocuria rhizophila.</title>
        <authorList>
            <person name="Takarada H."/>
            <person name="Sekine M."/>
            <person name="Kosugi H."/>
            <person name="Matsuo Y."/>
            <person name="Fujisawa T."/>
            <person name="Omata S."/>
            <person name="Kishi E."/>
            <person name="Shimizu A."/>
            <person name="Tsukatani N."/>
            <person name="Tanikawa S."/>
            <person name="Fujita N."/>
            <person name="Harayama S."/>
        </authorList>
    </citation>
    <scope>NUCLEOTIDE SEQUENCE [LARGE SCALE GENOMIC DNA]</scope>
    <source>
        <strain>ATCC 9341 / DSM 348 / NBRC 103217 / DC2201</strain>
    </source>
</reference>
<protein>
    <recommendedName>
        <fullName evidence="1">Large ribosomal subunit protein bL34</fullName>
    </recommendedName>
    <alternativeName>
        <fullName evidence="2">50S ribosomal protein L34</fullName>
    </alternativeName>
</protein>
<name>RL34_KOCRD</name>
<evidence type="ECO:0000255" key="1">
    <source>
        <dbReference type="HAMAP-Rule" id="MF_00391"/>
    </source>
</evidence>
<evidence type="ECO:0000305" key="2"/>
<sequence>MPKRTFQPNNRRRARKHGFRARMRTRAGRAIIGARRSKGRASLSA</sequence>